<feature type="chain" id="PRO_1000058823" description="Adenylate kinase">
    <location>
        <begin position="1"/>
        <end position="214"/>
    </location>
</feature>
<feature type="region of interest" description="NMP" evidence="2">
    <location>
        <begin position="30"/>
        <end position="59"/>
    </location>
</feature>
<feature type="region of interest" description="LID">
    <location>
        <begin position="122"/>
        <end position="159"/>
    </location>
</feature>
<feature type="binding site" evidence="2">
    <location>
        <begin position="10"/>
        <end position="15"/>
    </location>
    <ligand>
        <name>ATP</name>
        <dbReference type="ChEBI" id="CHEBI:30616"/>
    </ligand>
</feature>
<feature type="binding site" evidence="2">
    <location>
        <position position="31"/>
    </location>
    <ligand>
        <name>AMP</name>
        <dbReference type="ChEBI" id="CHEBI:456215"/>
    </ligand>
</feature>
<feature type="binding site" evidence="2">
    <location>
        <position position="36"/>
    </location>
    <ligand>
        <name>AMP</name>
        <dbReference type="ChEBI" id="CHEBI:456215"/>
    </ligand>
</feature>
<feature type="binding site" evidence="2">
    <location>
        <begin position="57"/>
        <end position="59"/>
    </location>
    <ligand>
        <name>AMP</name>
        <dbReference type="ChEBI" id="CHEBI:456215"/>
    </ligand>
</feature>
<feature type="binding site" evidence="2">
    <location>
        <begin position="85"/>
        <end position="88"/>
    </location>
    <ligand>
        <name>AMP</name>
        <dbReference type="ChEBI" id="CHEBI:456215"/>
    </ligand>
</feature>
<feature type="binding site" evidence="2">
    <location>
        <position position="92"/>
    </location>
    <ligand>
        <name>AMP</name>
        <dbReference type="ChEBI" id="CHEBI:456215"/>
    </ligand>
</feature>
<feature type="binding site" evidence="2">
    <location>
        <position position="123"/>
    </location>
    <ligand>
        <name>ATP</name>
        <dbReference type="ChEBI" id="CHEBI:30616"/>
    </ligand>
</feature>
<feature type="binding site" evidence="2">
    <location>
        <begin position="132"/>
        <end position="133"/>
    </location>
    <ligand>
        <name>ATP</name>
        <dbReference type="ChEBI" id="CHEBI:30616"/>
    </ligand>
</feature>
<feature type="binding site" evidence="2">
    <location>
        <position position="156"/>
    </location>
    <ligand>
        <name>AMP</name>
        <dbReference type="ChEBI" id="CHEBI:456215"/>
    </ligand>
</feature>
<feature type="binding site" evidence="2">
    <location>
        <position position="167"/>
    </location>
    <ligand>
        <name>AMP</name>
        <dbReference type="ChEBI" id="CHEBI:456215"/>
    </ligand>
</feature>
<feature type="binding site" evidence="2">
    <location>
        <position position="200"/>
    </location>
    <ligand>
        <name>ATP</name>
        <dbReference type="ChEBI" id="CHEBI:30616"/>
    </ligand>
</feature>
<feature type="modified residue" description="N6-acetyllysine" evidence="1">
    <location>
        <position position="192"/>
    </location>
</feature>
<evidence type="ECO:0000250" key="1"/>
<evidence type="ECO:0000255" key="2">
    <source>
        <dbReference type="HAMAP-Rule" id="MF_00235"/>
    </source>
</evidence>
<reference key="1">
    <citation type="journal article" date="2008" name="J. Bacteriol.">
        <title>The pangenome structure of Escherichia coli: comparative genomic analysis of E. coli commensal and pathogenic isolates.</title>
        <authorList>
            <person name="Rasko D.A."/>
            <person name="Rosovitz M.J."/>
            <person name="Myers G.S.A."/>
            <person name="Mongodin E.F."/>
            <person name="Fricke W.F."/>
            <person name="Gajer P."/>
            <person name="Crabtree J."/>
            <person name="Sebaihia M."/>
            <person name="Thomson N.R."/>
            <person name="Chaudhuri R."/>
            <person name="Henderson I.R."/>
            <person name="Sperandio V."/>
            <person name="Ravel J."/>
        </authorList>
    </citation>
    <scope>NUCLEOTIDE SEQUENCE [LARGE SCALE GENOMIC DNA]</scope>
    <source>
        <strain>HS</strain>
    </source>
</reference>
<keyword id="KW-0007">Acetylation</keyword>
<keyword id="KW-0067">ATP-binding</keyword>
<keyword id="KW-0963">Cytoplasm</keyword>
<keyword id="KW-0418">Kinase</keyword>
<keyword id="KW-0545">Nucleotide biosynthesis</keyword>
<keyword id="KW-0547">Nucleotide-binding</keyword>
<keyword id="KW-0808">Transferase</keyword>
<sequence length="214" mass="23586">MRIILLGAPGAGKGTQAQFIMEKYGIPQISTGDMLRAAVKSGSELGKQAKDIMDAGKLVTDELVIALVKERIAQEDCRNGFLLDGFPRTIPQADAMKEAGINVDYVLEFDVPDELIVDRIVGRRVHAPSGRVYHVKFNPPKVEGKDDVTGEELTTRKDDQEETVRKRLVEYHQMTAPLIGYYSKEAEAGNTKYAKVDGTKPVAEVRADLEKILG</sequence>
<protein>
    <recommendedName>
        <fullName evidence="2">Adenylate kinase</fullName>
        <shortName evidence="2">AK</shortName>
        <ecNumber evidence="2">2.7.4.3</ecNumber>
    </recommendedName>
    <alternativeName>
        <fullName evidence="2">ATP-AMP transphosphorylase</fullName>
    </alternativeName>
    <alternativeName>
        <fullName evidence="2">ATP:AMP phosphotransferase</fullName>
    </alternativeName>
    <alternativeName>
        <fullName evidence="2">Adenylate monophosphate kinase</fullName>
    </alternativeName>
</protein>
<accession>A7ZXD2</accession>
<name>KAD_ECOHS</name>
<comment type="function">
    <text evidence="2">Catalyzes the reversible transfer of the terminal phosphate group between ATP and AMP. Plays an important role in cellular energy homeostasis and in adenine nucleotide metabolism.</text>
</comment>
<comment type="catalytic activity">
    <reaction evidence="2">
        <text>AMP + ATP = 2 ADP</text>
        <dbReference type="Rhea" id="RHEA:12973"/>
        <dbReference type="ChEBI" id="CHEBI:30616"/>
        <dbReference type="ChEBI" id="CHEBI:456215"/>
        <dbReference type="ChEBI" id="CHEBI:456216"/>
        <dbReference type="EC" id="2.7.4.3"/>
    </reaction>
</comment>
<comment type="pathway">
    <text evidence="2">Purine metabolism; AMP biosynthesis via salvage pathway; AMP from ADP: step 1/1.</text>
</comment>
<comment type="subunit">
    <text evidence="2">Monomer.</text>
</comment>
<comment type="subcellular location">
    <subcellularLocation>
        <location evidence="2">Cytoplasm</location>
    </subcellularLocation>
</comment>
<comment type="domain">
    <text evidence="2">Consists of three domains, a large central CORE domain and two small peripheral domains, NMPbind and LID, which undergo movements during catalysis. The LID domain closes over the site of phosphoryl transfer upon ATP binding. Assembling and dissambling the active center during each catalytic cycle provides an effective means to prevent ATP hydrolysis.</text>
</comment>
<comment type="similarity">
    <text evidence="2">Belongs to the adenylate kinase family.</text>
</comment>
<organism>
    <name type="scientific">Escherichia coli O9:H4 (strain HS)</name>
    <dbReference type="NCBI Taxonomy" id="331112"/>
    <lineage>
        <taxon>Bacteria</taxon>
        <taxon>Pseudomonadati</taxon>
        <taxon>Pseudomonadota</taxon>
        <taxon>Gammaproteobacteria</taxon>
        <taxon>Enterobacterales</taxon>
        <taxon>Enterobacteriaceae</taxon>
        <taxon>Escherichia</taxon>
    </lineage>
</organism>
<proteinExistence type="inferred from homology"/>
<gene>
    <name evidence="2" type="primary">adk</name>
    <name type="ordered locus">EcHS_A0551</name>
</gene>
<dbReference type="EC" id="2.7.4.3" evidence="2"/>
<dbReference type="EMBL" id="CP000802">
    <property type="protein sequence ID" value="ABV04936.1"/>
    <property type="molecule type" value="Genomic_DNA"/>
</dbReference>
<dbReference type="RefSeq" id="WP_001220233.1">
    <property type="nucleotide sequence ID" value="NC_009800.1"/>
</dbReference>
<dbReference type="BMRB" id="A7ZXD2"/>
<dbReference type="SMR" id="A7ZXD2"/>
<dbReference type="GeneID" id="75170492"/>
<dbReference type="KEGG" id="ecx:EcHS_A0551"/>
<dbReference type="HOGENOM" id="CLU_032354_1_2_6"/>
<dbReference type="UniPathway" id="UPA00588">
    <property type="reaction ID" value="UER00649"/>
</dbReference>
<dbReference type="GO" id="GO:0005737">
    <property type="term" value="C:cytoplasm"/>
    <property type="evidence" value="ECO:0007669"/>
    <property type="project" value="UniProtKB-SubCell"/>
</dbReference>
<dbReference type="GO" id="GO:0004017">
    <property type="term" value="F:adenylate kinase activity"/>
    <property type="evidence" value="ECO:0007669"/>
    <property type="project" value="UniProtKB-UniRule"/>
</dbReference>
<dbReference type="GO" id="GO:0005524">
    <property type="term" value="F:ATP binding"/>
    <property type="evidence" value="ECO:0007669"/>
    <property type="project" value="UniProtKB-UniRule"/>
</dbReference>
<dbReference type="GO" id="GO:0044209">
    <property type="term" value="P:AMP salvage"/>
    <property type="evidence" value="ECO:0007669"/>
    <property type="project" value="UniProtKB-UniRule"/>
</dbReference>
<dbReference type="CDD" id="cd01428">
    <property type="entry name" value="ADK"/>
    <property type="match status" value="1"/>
</dbReference>
<dbReference type="FunFam" id="3.40.50.300:FF:000106">
    <property type="entry name" value="Adenylate kinase mitochondrial"/>
    <property type="match status" value="1"/>
</dbReference>
<dbReference type="Gene3D" id="3.40.50.300">
    <property type="entry name" value="P-loop containing nucleotide triphosphate hydrolases"/>
    <property type="match status" value="1"/>
</dbReference>
<dbReference type="HAMAP" id="MF_00235">
    <property type="entry name" value="Adenylate_kinase_Adk"/>
    <property type="match status" value="1"/>
</dbReference>
<dbReference type="InterPro" id="IPR006259">
    <property type="entry name" value="Adenyl_kin_sub"/>
</dbReference>
<dbReference type="InterPro" id="IPR000850">
    <property type="entry name" value="Adenylat/UMP-CMP_kin"/>
</dbReference>
<dbReference type="InterPro" id="IPR033690">
    <property type="entry name" value="Adenylat_kinase_CS"/>
</dbReference>
<dbReference type="InterPro" id="IPR007862">
    <property type="entry name" value="Adenylate_kinase_lid-dom"/>
</dbReference>
<dbReference type="InterPro" id="IPR027417">
    <property type="entry name" value="P-loop_NTPase"/>
</dbReference>
<dbReference type="NCBIfam" id="TIGR01351">
    <property type="entry name" value="adk"/>
    <property type="match status" value="1"/>
</dbReference>
<dbReference type="NCBIfam" id="NF001379">
    <property type="entry name" value="PRK00279.1-1"/>
    <property type="match status" value="1"/>
</dbReference>
<dbReference type="NCBIfam" id="NF001380">
    <property type="entry name" value="PRK00279.1-2"/>
    <property type="match status" value="1"/>
</dbReference>
<dbReference type="NCBIfam" id="NF001381">
    <property type="entry name" value="PRK00279.1-3"/>
    <property type="match status" value="1"/>
</dbReference>
<dbReference type="NCBIfam" id="NF011100">
    <property type="entry name" value="PRK14527.1"/>
    <property type="match status" value="1"/>
</dbReference>
<dbReference type="PANTHER" id="PTHR23359">
    <property type="entry name" value="NUCLEOTIDE KINASE"/>
    <property type="match status" value="1"/>
</dbReference>
<dbReference type="Pfam" id="PF00406">
    <property type="entry name" value="ADK"/>
    <property type="match status" value="1"/>
</dbReference>
<dbReference type="Pfam" id="PF05191">
    <property type="entry name" value="ADK_lid"/>
    <property type="match status" value="1"/>
</dbReference>
<dbReference type="PRINTS" id="PR00094">
    <property type="entry name" value="ADENYLTKNASE"/>
</dbReference>
<dbReference type="SUPFAM" id="SSF52540">
    <property type="entry name" value="P-loop containing nucleoside triphosphate hydrolases"/>
    <property type="match status" value="1"/>
</dbReference>
<dbReference type="PROSITE" id="PS00113">
    <property type="entry name" value="ADENYLATE_KINASE"/>
    <property type="match status" value="1"/>
</dbReference>